<accession>Q2JTN9</accession>
<reference key="1">
    <citation type="journal article" date="2007" name="ISME J.">
        <title>Population level functional diversity in a microbial community revealed by comparative genomic and metagenomic analyses.</title>
        <authorList>
            <person name="Bhaya D."/>
            <person name="Grossman A.R."/>
            <person name="Steunou A.-S."/>
            <person name="Khuri N."/>
            <person name="Cohan F.M."/>
            <person name="Hamamura N."/>
            <person name="Melendrez M.C."/>
            <person name="Bateson M.M."/>
            <person name="Ward D.M."/>
            <person name="Heidelberg J.F."/>
        </authorList>
    </citation>
    <scope>NUCLEOTIDE SEQUENCE [LARGE SCALE GENOMIC DNA]</scope>
    <source>
        <strain>JA-3-3Ab</strain>
    </source>
</reference>
<keyword id="KW-0249">Electron transport</keyword>
<keyword id="KW-0472">Membrane</keyword>
<keyword id="KW-0602">Photosynthesis</keyword>
<keyword id="KW-0793">Thylakoid</keyword>
<keyword id="KW-0812">Transmembrane</keyword>
<keyword id="KW-1133">Transmembrane helix</keyword>
<keyword id="KW-0813">Transport</keyword>
<name>PETD_SYNJA</name>
<sequence length="170" mass="18573">MPVSKQVIATEAITRKVDLDNPKVLAKLKKNMGHMTYGEPAWPNDLLFMFPVVILGTIGVIVGLAVMDPAGVGEPADPFATPLEILPEWYLYPAFHILRIAPNKLLGIALMSAIPVGLLFVPFIENVNKFQNPLRRPVATTVFLIGTLVTLYLGIGATLPLDKWVTLGLF</sequence>
<dbReference type="EMBL" id="CP000239">
    <property type="protein sequence ID" value="ABC99950.1"/>
    <property type="status" value="ALT_INIT"/>
    <property type="molecule type" value="Genomic_DNA"/>
</dbReference>
<dbReference type="RefSeq" id="WP_049749760.1">
    <property type="nucleotide sequence ID" value="NC_007775.1"/>
</dbReference>
<dbReference type="SMR" id="Q2JTN9"/>
<dbReference type="STRING" id="321327.CYA_1797"/>
<dbReference type="KEGG" id="cya:CYA_1797"/>
<dbReference type="eggNOG" id="COG1290">
    <property type="taxonomic scope" value="Bacteria"/>
</dbReference>
<dbReference type="HOGENOM" id="CLU_112652_0_0_3"/>
<dbReference type="OrthoDB" id="529454at2"/>
<dbReference type="Proteomes" id="UP000008818">
    <property type="component" value="Chromosome"/>
</dbReference>
<dbReference type="GO" id="GO:0031676">
    <property type="term" value="C:plasma membrane-derived thylakoid membrane"/>
    <property type="evidence" value="ECO:0007669"/>
    <property type="project" value="UniProtKB-SubCell"/>
</dbReference>
<dbReference type="GO" id="GO:0045158">
    <property type="term" value="F:electron transporter, transferring electrons within cytochrome b6/f complex of photosystem II activity"/>
    <property type="evidence" value="ECO:0007669"/>
    <property type="project" value="UniProtKB-UniRule"/>
</dbReference>
<dbReference type="GO" id="GO:0045156">
    <property type="term" value="F:electron transporter, transferring electrons within the cyclic electron transport pathway of photosynthesis activity"/>
    <property type="evidence" value="ECO:0007669"/>
    <property type="project" value="InterPro"/>
</dbReference>
<dbReference type="GO" id="GO:0016491">
    <property type="term" value="F:oxidoreductase activity"/>
    <property type="evidence" value="ECO:0007669"/>
    <property type="project" value="InterPro"/>
</dbReference>
<dbReference type="GO" id="GO:0009767">
    <property type="term" value="P:photosynthetic electron transport chain"/>
    <property type="evidence" value="ECO:0007669"/>
    <property type="project" value="InterPro"/>
</dbReference>
<dbReference type="CDD" id="cd00290">
    <property type="entry name" value="cytochrome_b_C"/>
    <property type="match status" value="1"/>
</dbReference>
<dbReference type="FunFam" id="1.10.287.980:FF:000001">
    <property type="entry name" value="Cytochrome b6-f complex subunit 4"/>
    <property type="match status" value="1"/>
</dbReference>
<dbReference type="Gene3D" id="1.10.287.980">
    <property type="entry name" value="plastocyanin oxidoreductase"/>
    <property type="match status" value="1"/>
</dbReference>
<dbReference type="Gene3D" id="1.20.5.510">
    <property type="entry name" value="Single helix bin"/>
    <property type="match status" value="1"/>
</dbReference>
<dbReference type="HAMAP" id="MF_01344">
    <property type="entry name" value="Cytb6_f_subIV"/>
    <property type="match status" value="1"/>
</dbReference>
<dbReference type="InterPro" id="IPR005798">
    <property type="entry name" value="Cyt_b/b6_C"/>
</dbReference>
<dbReference type="InterPro" id="IPR036150">
    <property type="entry name" value="Cyt_b/b6_C_sf"/>
</dbReference>
<dbReference type="InterPro" id="IPR005870">
    <property type="entry name" value="Cyt_b6/f_cplx_suIV"/>
</dbReference>
<dbReference type="InterPro" id="IPR048260">
    <property type="entry name" value="Cytochrome_b_C_euk/bac"/>
</dbReference>
<dbReference type="NCBIfam" id="TIGR01156">
    <property type="entry name" value="cytb6_f_IV"/>
    <property type="match status" value="1"/>
</dbReference>
<dbReference type="PANTHER" id="PTHR19271">
    <property type="entry name" value="CYTOCHROME B"/>
    <property type="match status" value="1"/>
</dbReference>
<dbReference type="PANTHER" id="PTHR19271:SF16">
    <property type="entry name" value="CYTOCHROME B"/>
    <property type="match status" value="1"/>
</dbReference>
<dbReference type="Pfam" id="PF00032">
    <property type="entry name" value="Cytochrom_B_C"/>
    <property type="match status" value="1"/>
</dbReference>
<dbReference type="PIRSF" id="PIRSF000033">
    <property type="entry name" value="B6f_17K"/>
    <property type="match status" value="1"/>
</dbReference>
<dbReference type="SUPFAM" id="SSF81648">
    <property type="entry name" value="a domain/subunit of cytochrome bc1 complex (Ubiquinol-cytochrome c reductase)"/>
    <property type="match status" value="1"/>
</dbReference>
<dbReference type="PROSITE" id="PS51003">
    <property type="entry name" value="CYTB_CTER"/>
    <property type="match status" value="1"/>
</dbReference>
<organism>
    <name type="scientific">Synechococcus sp. (strain JA-3-3Ab)</name>
    <name type="common">Cyanobacteria bacterium Yellowstone A-Prime</name>
    <dbReference type="NCBI Taxonomy" id="321327"/>
    <lineage>
        <taxon>Bacteria</taxon>
        <taxon>Bacillati</taxon>
        <taxon>Cyanobacteriota</taxon>
        <taxon>Cyanophyceae</taxon>
        <taxon>Synechococcales</taxon>
        <taxon>Synechococcaceae</taxon>
        <taxon>Synechococcus</taxon>
    </lineage>
</organism>
<feature type="chain" id="PRO_0000255576" description="Cytochrome b6-f complex subunit 4">
    <location>
        <begin position="1"/>
        <end position="170"/>
    </location>
</feature>
<feature type="transmembrane region" description="Helical" evidence="1">
    <location>
        <begin position="46"/>
        <end position="66"/>
    </location>
</feature>
<feature type="transmembrane region" description="Helical" evidence="1">
    <location>
        <begin position="105"/>
        <end position="125"/>
    </location>
</feature>
<feature type="transmembrane region" description="Helical" evidence="1">
    <location>
        <begin position="141"/>
        <end position="161"/>
    </location>
</feature>
<gene>
    <name evidence="1" type="primary">petD</name>
    <name type="ordered locus">CYA_1797</name>
</gene>
<protein>
    <recommendedName>
        <fullName evidence="1">Cytochrome b6-f complex subunit 4</fullName>
    </recommendedName>
    <alternativeName>
        <fullName evidence="1">17 kDa polypeptide</fullName>
    </alternativeName>
</protein>
<evidence type="ECO:0000255" key="1">
    <source>
        <dbReference type="HAMAP-Rule" id="MF_01344"/>
    </source>
</evidence>
<evidence type="ECO:0000305" key="2"/>
<proteinExistence type="inferred from homology"/>
<comment type="function">
    <text evidence="1">Component of the cytochrome b6-f complex, which mediates electron transfer between photosystem II (PSII) and photosystem I (PSI), cyclic electron flow around PSI, and state transitions.</text>
</comment>
<comment type="subunit">
    <text evidence="1">The 4 large subunits of the cytochrome b6-f complex are cytochrome b6, subunit IV (17 kDa polypeptide, PetD), cytochrome f and the Rieske protein, while the 4 small subunits are PetG, PetL, PetM and PetN. The complex functions as a dimer.</text>
</comment>
<comment type="subcellular location">
    <subcellularLocation>
        <location evidence="1">Cellular thylakoid membrane</location>
        <topology evidence="1">Multi-pass membrane protein</topology>
    </subcellularLocation>
</comment>
<comment type="similarity">
    <text evidence="1">Belongs to the cytochrome b family. PetD subfamily.</text>
</comment>
<comment type="sequence caution" evidence="2">
    <conflict type="erroneous initiation">
        <sequence resource="EMBL-CDS" id="ABC99950"/>
    </conflict>
</comment>